<comment type="function">
    <text evidence="1">The UvrABC repair system catalyzes the recognition and processing of DNA lesions. UvrA is an ATPase and a DNA-binding protein. A damage recognition complex composed of 2 UvrA and 2 UvrB subunits scans DNA for abnormalities. When the presence of a lesion has been verified by UvrB, the UvrA molecules dissociate.</text>
</comment>
<comment type="subunit">
    <text evidence="1">Forms a heterotetramer with UvrB during the search for lesions.</text>
</comment>
<comment type="subcellular location">
    <subcellularLocation>
        <location evidence="1">Cytoplasm</location>
    </subcellularLocation>
</comment>
<comment type="similarity">
    <text evidence="1">Belongs to the ABC transporter superfamily. UvrA family.</text>
</comment>
<accession>Q56242</accession>
<accession>Q5SID4</accession>
<dbReference type="EMBL" id="D49911">
    <property type="protein sequence ID" value="BAA08652.1"/>
    <property type="molecule type" value="Genomic_DNA"/>
</dbReference>
<dbReference type="EMBL" id="AP008226">
    <property type="protein sequence ID" value="BAD71263.1"/>
    <property type="molecule type" value="Genomic_DNA"/>
</dbReference>
<dbReference type="RefSeq" id="WP_011228683.1">
    <property type="nucleotide sequence ID" value="NC_006461.1"/>
</dbReference>
<dbReference type="RefSeq" id="YP_144706.1">
    <property type="nucleotide sequence ID" value="NC_006461.1"/>
</dbReference>
<dbReference type="SMR" id="Q56242"/>
<dbReference type="EnsemblBacteria" id="BAD71263">
    <property type="protein sequence ID" value="BAD71263"/>
    <property type="gene ID" value="BAD71263"/>
</dbReference>
<dbReference type="GeneID" id="3169496"/>
<dbReference type="KEGG" id="ttj:TTHA1440"/>
<dbReference type="PATRIC" id="fig|300852.9.peg.1414"/>
<dbReference type="eggNOG" id="COG0178">
    <property type="taxonomic scope" value="Bacteria"/>
</dbReference>
<dbReference type="HOGENOM" id="CLU_001370_0_2_0"/>
<dbReference type="PhylomeDB" id="Q56242"/>
<dbReference type="Proteomes" id="UP000000532">
    <property type="component" value="Chromosome"/>
</dbReference>
<dbReference type="GO" id="GO:0005737">
    <property type="term" value="C:cytoplasm"/>
    <property type="evidence" value="ECO:0007669"/>
    <property type="project" value="UniProtKB-SubCell"/>
</dbReference>
<dbReference type="GO" id="GO:0009380">
    <property type="term" value="C:excinuclease repair complex"/>
    <property type="evidence" value="ECO:0007669"/>
    <property type="project" value="InterPro"/>
</dbReference>
<dbReference type="GO" id="GO:0005524">
    <property type="term" value="F:ATP binding"/>
    <property type="evidence" value="ECO:0007669"/>
    <property type="project" value="UniProtKB-UniRule"/>
</dbReference>
<dbReference type="GO" id="GO:0016887">
    <property type="term" value="F:ATP hydrolysis activity"/>
    <property type="evidence" value="ECO:0007669"/>
    <property type="project" value="InterPro"/>
</dbReference>
<dbReference type="GO" id="GO:0003677">
    <property type="term" value="F:DNA binding"/>
    <property type="evidence" value="ECO:0007669"/>
    <property type="project" value="UniProtKB-UniRule"/>
</dbReference>
<dbReference type="GO" id="GO:0009381">
    <property type="term" value="F:excinuclease ABC activity"/>
    <property type="evidence" value="ECO:0007669"/>
    <property type="project" value="UniProtKB-UniRule"/>
</dbReference>
<dbReference type="GO" id="GO:0008270">
    <property type="term" value="F:zinc ion binding"/>
    <property type="evidence" value="ECO:0007669"/>
    <property type="project" value="UniProtKB-UniRule"/>
</dbReference>
<dbReference type="GO" id="GO:0006289">
    <property type="term" value="P:nucleotide-excision repair"/>
    <property type="evidence" value="ECO:0007669"/>
    <property type="project" value="UniProtKB-UniRule"/>
</dbReference>
<dbReference type="GO" id="GO:0009432">
    <property type="term" value="P:SOS response"/>
    <property type="evidence" value="ECO:0007669"/>
    <property type="project" value="UniProtKB-UniRule"/>
</dbReference>
<dbReference type="CDD" id="cd03270">
    <property type="entry name" value="ABC_UvrA_I"/>
    <property type="match status" value="2"/>
</dbReference>
<dbReference type="CDD" id="cd03271">
    <property type="entry name" value="ABC_UvrA_II"/>
    <property type="match status" value="1"/>
</dbReference>
<dbReference type="FunFam" id="1.20.1580.10:FF:000002">
    <property type="entry name" value="UvrABC system protein A"/>
    <property type="match status" value="1"/>
</dbReference>
<dbReference type="Gene3D" id="1.10.8.280">
    <property type="entry name" value="ABC transporter ATPase domain-like"/>
    <property type="match status" value="1"/>
</dbReference>
<dbReference type="Gene3D" id="1.20.1580.10">
    <property type="entry name" value="ABC transporter ATPase like domain"/>
    <property type="match status" value="2"/>
</dbReference>
<dbReference type="Gene3D" id="3.30.1490.20">
    <property type="entry name" value="ATP-grasp fold, A domain"/>
    <property type="match status" value="1"/>
</dbReference>
<dbReference type="Gene3D" id="3.40.50.300">
    <property type="entry name" value="P-loop containing nucleotide triphosphate hydrolases"/>
    <property type="match status" value="2"/>
</dbReference>
<dbReference type="HAMAP" id="MF_00205">
    <property type="entry name" value="UvrA"/>
    <property type="match status" value="1"/>
</dbReference>
<dbReference type="InterPro" id="IPR003593">
    <property type="entry name" value="AAA+_ATPase"/>
</dbReference>
<dbReference type="InterPro" id="IPR003439">
    <property type="entry name" value="ABC_transporter-like_ATP-bd"/>
</dbReference>
<dbReference type="InterPro" id="IPR017871">
    <property type="entry name" value="ABC_transporter-like_CS"/>
</dbReference>
<dbReference type="InterPro" id="IPR013815">
    <property type="entry name" value="ATP_grasp_subdomain_1"/>
</dbReference>
<dbReference type="InterPro" id="IPR027417">
    <property type="entry name" value="P-loop_NTPase"/>
</dbReference>
<dbReference type="InterPro" id="IPR004602">
    <property type="entry name" value="UvrA"/>
</dbReference>
<dbReference type="InterPro" id="IPR041552">
    <property type="entry name" value="UvrA_DNA-bd"/>
</dbReference>
<dbReference type="InterPro" id="IPR041102">
    <property type="entry name" value="UvrA_inter"/>
</dbReference>
<dbReference type="NCBIfam" id="NF001503">
    <property type="entry name" value="PRK00349.1"/>
    <property type="match status" value="1"/>
</dbReference>
<dbReference type="NCBIfam" id="TIGR00630">
    <property type="entry name" value="uvra"/>
    <property type="match status" value="1"/>
</dbReference>
<dbReference type="PANTHER" id="PTHR43152">
    <property type="entry name" value="UVRABC SYSTEM PROTEIN A"/>
    <property type="match status" value="1"/>
</dbReference>
<dbReference type="PANTHER" id="PTHR43152:SF3">
    <property type="entry name" value="UVRABC SYSTEM PROTEIN A"/>
    <property type="match status" value="1"/>
</dbReference>
<dbReference type="Pfam" id="PF17755">
    <property type="entry name" value="UvrA_DNA-bind"/>
    <property type="match status" value="1"/>
</dbReference>
<dbReference type="Pfam" id="PF17760">
    <property type="entry name" value="UvrA_inter"/>
    <property type="match status" value="1"/>
</dbReference>
<dbReference type="SMART" id="SM00382">
    <property type="entry name" value="AAA"/>
    <property type="match status" value="2"/>
</dbReference>
<dbReference type="SUPFAM" id="SSF52540">
    <property type="entry name" value="P-loop containing nucleoside triphosphate hydrolases"/>
    <property type="match status" value="2"/>
</dbReference>
<dbReference type="PROSITE" id="PS00211">
    <property type="entry name" value="ABC_TRANSPORTER_1"/>
    <property type="match status" value="2"/>
</dbReference>
<dbReference type="PROSITE" id="PS50893">
    <property type="entry name" value="ABC_TRANSPORTER_2"/>
    <property type="match status" value="2"/>
</dbReference>
<reference key="1">
    <citation type="journal article" date="1996" name="Gene">
        <title>Cloning, sequencing and expression of the uvrA gene from an extremely thermophilic bacterium, Thermus thermophilus HB8.</title>
        <authorList>
            <person name="Yamamoto N."/>
            <person name="Kato R."/>
            <person name="Kuramitsu S."/>
        </authorList>
    </citation>
    <scope>NUCLEOTIDE SEQUENCE [GENOMIC DNA]</scope>
</reference>
<reference key="2">
    <citation type="submission" date="2004-11" db="EMBL/GenBank/DDBJ databases">
        <title>Complete genome sequence of Thermus thermophilus HB8.</title>
        <authorList>
            <person name="Masui R."/>
            <person name="Kurokawa K."/>
            <person name="Nakagawa N."/>
            <person name="Tokunaga F."/>
            <person name="Koyama Y."/>
            <person name="Shibata T."/>
            <person name="Oshima T."/>
            <person name="Yokoyama S."/>
            <person name="Yasunaga T."/>
            <person name="Kuramitsu S."/>
        </authorList>
    </citation>
    <scope>NUCLEOTIDE SEQUENCE [LARGE SCALE GENOMIC DNA]</scope>
    <source>
        <strain>ATCC 27634 / DSM 579 / HB8</strain>
    </source>
</reference>
<keyword id="KW-0067">ATP-binding</keyword>
<keyword id="KW-0963">Cytoplasm</keyword>
<keyword id="KW-0227">DNA damage</keyword>
<keyword id="KW-0228">DNA excision</keyword>
<keyword id="KW-0234">DNA repair</keyword>
<keyword id="KW-0238">DNA-binding</keyword>
<keyword id="KW-0267">Excision nuclease</keyword>
<keyword id="KW-0479">Metal-binding</keyword>
<keyword id="KW-0547">Nucleotide-binding</keyword>
<keyword id="KW-1185">Reference proteome</keyword>
<keyword id="KW-0677">Repeat</keyword>
<keyword id="KW-0742">SOS response</keyword>
<keyword id="KW-0862">Zinc</keyword>
<keyword id="KW-0863">Zinc-finger</keyword>
<organism>
    <name type="scientific">Thermus thermophilus (strain ATCC 27634 / DSM 579 / HB8)</name>
    <dbReference type="NCBI Taxonomy" id="300852"/>
    <lineage>
        <taxon>Bacteria</taxon>
        <taxon>Thermotogati</taxon>
        <taxon>Deinococcota</taxon>
        <taxon>Deinococci</taxon>
        <taxon>Thermales</taxon>
        <taxon>Thermaceae</taxon>
        <taxon>Thermus</taxon>
    </lineage>
</organism>
<gene>
    <name evidence="1" type="primary">uvrA</name>
    <name type="ordered locus">TTHA1440</name>
</gene>
<feature type="chain" id="PRO_0000093108" description="UvrABC system protein A">
    <location>
        <begin position="1"/>
        <end position="952"/>
    </location>
</feature>
<feature type="domain" description="ABC transporter 1" evidence="1">
    <location>
        <begin position="309"/>
        <end position="591"/>
    </location>
</feature>
<feature type="domain" description="ABC transporter 2" evidence="1">
    <location>
        <begin position="611"/>
        <end position="938"/>
    </location>
</feature>
<feature type="zinc finger region" description="C4-type" evidence="1">
    <location>
        <begin position="253"/>
        <end position="280"/>
    </location>
</feature>
<feature type="zinc finger region" description="C4-type" evidence="1">
    <location>
        <begin position="742"/>
        <end position="768"/>
    </location>
</feature>
<feature type="binding site" evidence="1">
    <location>
        <begin position="31"/>
        <end position="38"/>
    </location>
    <ligand>
        <name>ATP</name>
        <dbReference type="ChEBI" id="CHEBI:30616"/>
    </ligand>
</feature>
<feature type="binding site" evidence="1">
    <location>
        <begin position="643"/>
        <end position="650"/>
    </location>
    <ligand>
        <name>ATP</name>
        <dbReference type="ChEBI" id="CHEBI:30616"/>
    </ligand>
</feature>
<feature type="sequence conflict" description="In Ref. 1; BAA08652." evidence="2" ref="1">
    <original>A</original>
    <variation>S</variation>
    <location>
        <position position="837"/>
    </location>
</feature>
<feature type="sequence conflict" description="In Ref. 1; BAA08652." evidence="2" ref="1">
    <original>T</original>
    <variation>K</variation>
    <location>
        <position position="844"/>
    </location>
</feature>
<feature type="sequence conflict" description="In Ref. 1; BAA08652." evidence="2" ref="1">
    <original>GRK</original>
    <variation>RPQ</variation>
    <location>
        <begin position="847"/>
        <end position="849"/>
    </location>
</feature>
<evidence type="ECO:0000255" key="1">
    <source>
        <dbReference type="HAMAP-Rule" id="MF_00205"/>
    </source>
</evidence>
<evidence type="ECO:0000305" key="2"/>
<name>UVRA_THET8</name>
<sequence>MDRIVIRGAREHNLKNISLELPRGKFIVITGVSGSGKSTLAFDTIYAEGQRRYVESLSSYARQFLGVMDKPEVESIEGLSPAISIDQKTTSHNPRSTVGTVTEIHDYLRLLFARVGQAFCPECGRPIEKQSASEITDRLLKRPPGTRAILMAPLVRGRKGEYRKLFQQLLKEGYARVRVDGVIYLLEEAQGLSLEKYEKHDIDLVIDRVVLKEEERPRIAEAVELALLRGEGLLRVLYPDTGEEELFSEKFACPEHGSVLEELEPRIFSFNSPYGACPACSGLGYRQEFDPELVVNPELSLAEGAILPWSRGRDTGRSYLWDRLRALAEHLGFDLKTPFKDLPEEAKRAVLYGLPEPFEVVFRRGGKETFRVEVRYEGVIPWLEKRYQESDSEGVREALEGFMSLRPCPACGGTRYKREVLSVKVAGRNIAEVSALPVREALAFFQGLEKTLPPFQAQIARPILREIVERLGFLVDVGLDYLTLDRAANTLSGGEAQRIRLATQVGSGLTGVLYVLDEPSIGLHPRDNQRLIRTLKRLRDLGNTLIVVEHDEETMRAADWIVDMGPGAGIHGGEVVAQGTLEDILKSPQSLTGAYLRGEKRIPVPKERRKGNGKWLVLKGARAHNLKNVTLRIPLGRFVAITGPSGSGKSTLVHDVLYAALAQRLMRAKTTPGPYEALEGVEHLDKVIEIDQSPIGRTPRSNPATYTGVFDEIRDLFAKTPEARKRGYGPGRFSFNVKGGRCEACGGDGTVKIEMLFLPDLYVPCEVCKGKRYNKETLEVKLRGKSIADVLDMTVEEALDFFQNVPSIARKLQLMVDVGLGYMKLGQPSPTLSGGEAQRIKLATELGRKATGRTLYILDEPTTGLHFDDVAKLLSVLHRLVDAGNTVVVIEHNLDVVKTADWVIDLGPEGGDRGGEIVAEGTPEEVALTGSPTGAFLARIPEIAARIGVAAD</sequence>
<protein>
    <recommendedName>
        <fullName evidence="1">UvrABC system protein A</fullName>
        <shortName evidence="1">UvrA protein</shortName>
    </recommendedName>
    <alternativeName>
        <fullName evidence="1">Excinuclease ABC subunit A</fullName>
    </alternativeName>
</protein>
<proteinExistence type="inferred from homology"/>